<protein>
    <recommendedName>
        <fullName evidence="3">N-(2-amino-2-carboxyethyl)-L-glutamate synthase</fullName>
        <shortName evidence="3">ACEGA synthase</shortName>
        <ecNumber evidence="1">2.5.1.140</ecNumber>
    </recommendedName>
</protein>
<feature type="chain" id="PRO_0000395022" description="N-(2-amino-2-carboxyethyl)-L-glutamate synthase">
    <location>
        <begin position="1"/>
        <end position="326"/>
    </location>
</feature>
<feature type="binding site" evidence="1">
    <location>
        <position position="77"/>
    </location>
    <ligand>
        <name>pyridoxal 5'-phosphate</name>
        <dbReference type="ChEBI" id="CHEBI:597326"/>
    </ligand>
</feature>
<feature type="binding site" evidence="1">
    <location>
        <begin position="185"/>
        <end position="189"/>
    </location>
    <ligand>
        <name>pyridoxal 5'-phosphate</name>
        <dbReference type="ChEBI" id="CHEBI:597326"/>
    </ligand>
</feature>
<feature type="binding site" evidence="1">
    <location>
        <position position="272"/>
    </location>
    <ligand>
        <name>pyridoxal 5'-phosphate</name>
        <dbReference type="ChEBI" id="CHEBI:597326"/>
    </ligand>
</feature>
<feature type="modified residue" description="N6-(pyridoxal phosphate)lysine" evidence="1">
    <location>
        <position position="47"/>
    </location>
</feature>
<name>SBNA_STAAN</name>
<keyword id="KW-0663">Pyridoxal phosphate</keyword>
<keyword id="KW-0808">Transferase</keyword>
<dbReference type="EC" id="2.5.1.140" evidence="1"/>
<dbReference type="EMBL" id="BA000018">
    <property type="protein sequence ID" value="BAB41331.1"/>
    <property type="molecule type" value="Genomic_DNA"/>
</dbReference>
<dbReference type="PIR" id="H89771">
    <property type="entry name" value="H89771"/>
</dbReference>
<dbReference type="RefSeq" id="WP_000570807.1">
    <property type="nucleotide sequence ID" value="NC_002745.2"/>
</dbReference>
<dbReference type="SMR" id="Q99X99"/>
<dbReference type="EnsemblBacteria" id="BAB41331">
    <property type="protein sequence ID" value="BAB41331"/>
    <property type="gene ID" value="BAB41331"/>
</dbReference>
<dbReference type="KEGG" id="sau:SA0112"/>
<dbReference type="HOGENOM" id="CLU_021018_1_0_9"/>
<dbReference type="GO" id="GO:0016765">
    <property type="term" value="F:transferase activity, transferring alkyl or aryl (other than methyl) groups"/>
    <property type="evidence" value="ECO:0007669"/>
    <property type="project" value="UniProtKB-ARBA"/>
</dbReference>
<dbReference type="GO" id="GO:0006535">
    <property type="term" value="P:cysteine biosynthetic process from serine"/>
    <property type="evidence" value="ECO:0007669"/>
    <property type="project" value="InterPro"/>
</dbReference>
<dbReference type="CDD" id="cd01561">
    <property type="entry name" value="CBS_like"/>
    <property type="match status" value="1"/>
</dbReference>
<dbReference type="Gene3D" id="3.40.50.1100">
    <property type="match status" value="2"/>
</dbReference>
<dbReference type="InterPro" id="IPR050214">
    <property type="entry name" value="Cys_Synth/Cystath_Beta-Synth"/>
</dbReference>
<dbReference type="InterPro" id="IPR001216">
    <property type="entry name" value="P-phosphate_BS"/>
</dbReference>
<dbReference type="InterPro" id="IPR023927">
    <property type="entry name" value="SbnA"/>
</dbReference>
<dbReference type="InterPro" id="IPR001926">
    <property type="entry name" value="TrpB-like_PALP"/>
</dbReference>
<dbReference type="InterPro" id="IPR036052">
    <property type="entry name" value="TrpB-like_PALP_sf"/>
</dbReference>
<dbReference type="NCBIfam" id="TIGR03945">
    <property type="entry name" value="PLP_SbnA_fam"/>
    <property type="match status" value="1"/>
</dbReference>
<dbReference type="PANTHER" id="PTHR10314">
    <property type="entry name" value="CYSTATHIONINE BETA-SYNTHASE"/>
    <property type="match status" value="1"/>
</dbReference>
<dbReference type="Pfam" id="PF00291">
    <property type="entry name" value="PALP"/>
    <property type="match status" value="1"/>
</dbReference>
<dbReference type="SUPFAM" id="SSF53686">
    <property type="entry name" value="Tryptophan synthase beta subunit-like PLP-dependent enzymes"/>
    <property type="match status" value="1"/>
</dbReference>
<dbReference type="PROSITE" id="PS00901">
    <property type="entry name" value="CYS_SYNTHASE"/>
    <property type="match status" value="1"/>
</dbReference>
<gene>
    <name type="primary">sbnA</name>
    <name type="ordered locus">SA0112</name>
</gene>
<evidence type="ECO:0000250" key="1">
    <source>
        <dbReference type="UniProtKB" id="A6QDA0"/>
    </source>
</evidence>
<evidence type="ECO:0000250" key="2">
    <source>
        <dbReference type="UniProtKB" id="Q2G1N3"/>
    </source>
</evidence>
<evidence type="ECO:0000305" key="3"/>
<organism>
    <name type="scientific">Staphylococcus aureus (strain N315)</name>
    <dbReference type="NCBI Taxonomy" id="158879"/>
    <lineage>
        <taxon>Bacteria</taxon>
        <taxon>Bacillati</taxon>
        <taxon>Bacillota</taxon>
        <taxon>Bacilli</taxon>
        <taxon>Bacillales</taxon>
        <taxon>Staphylococcaceae</taxon>
        <taxon>Staphylococcus</taxon>
    </lineage>
</organism>
<reference key="1">
    <citation type="journal article" date="2001" name="Lancet">
        <title>Whole genome sequencing of meticillin-resistant Staphylococcus aureus.</title>
        <authorList>
            <person name="Kuroda M."/>
            <person name="Ohta T."/>
            <person name="Uchiyama I."/>
            <person name="Baba T."/>
            <person name="Yuzawa H."/>
            <person name="Kobayashi I."/>
            <person name="Cui L."/>
            <person name="Oguchi A."/>
            <person name="Aoki K."/>
            <person name="Nagai Y."/>
            <person name="Lian J.-Q."/>
            <person name="Ito T."/>
            <person name="Kanamori M."/>
            <person name="Matsumaru H."/>
            <person name="Maruyama A."/>
            <person name="Murakami H."/>
            <person name="Hosoyama A."/>
            <person name="Mizutani-Ui Y."/>
            <person name="Takahashi N.K."/>
            <person name="Sawano T."/>
            <person name="Inoue R."/>
            <person name="Kaito C."/>
            <person name="Sekimizu K."/>
            <person name="Hirakawa H."/>
            <person name="Kuhara S."/>
            <person name="Goto S."/>
            <person name="Yabuzaki J."/>
            <person name="Kanehisa M."/>
            <person name="Yamashita A."/>
            <person name="Oshima K."/>
            <person name="Furuya K."/>
            <person name="Yoshino C."/>
            <person name="Shiba T."/>
            <person name="Hattori M."/>
            <person name="Ogasawara N."/>
            <person name="Hayashi H."/>
            <person name="Hiramatsu K."/>
        </authorList>
    </citation>
    <scope>NUCLEOTIDE SEQUENCE [LARGE SCALE GENOMIC DNA]</scope>
    <source>
        <strain>N315</strain>
    </source>
</reference>
<accession>Q99X99</accession>
<sequence length="326" mass="35855">MIEKSQACHDSLLDSVGQTPMVQLHQLFPKHEVFAKLEYMNPGGSMKDRPAKYIIEHGIKHGLITENTHLIESTSGNLGIALAMIAKIKGLKLTCVVDPKISPTNLKIIKSYGANVEMVEEPDAHGGYLMTRIAKVQELLATIDDAYWINQYANELNWQSHYHGAGTEIVETIKQPIDYFVAPVSTTGSIMGMSRKIKEGHPNAQIVAVDAKGSVIFGDKPINRELPGIGASRVPEILNRSEINQVIHVDDYQSALGCRKLIDYEGIFAGGSTGSIIAAIEQLITSIEEGATIVTILPDRGDRYLDLVYSDTWLEKMKSRQGVKSE</sequence>
<proteinExistence type="inferred from homology"/>
<comment type="function">
    <text evidence="1">Catalyzes the synthesis of N-((2S)-2-amino-2-carboxyethyl)-L-glutamate (ACEGA) from O-phospho-L-serine and L-glutamate. Involved in the biosynthesis of L-2,3-diaminopropionic acid (L-Dap), a precursor of staphyloferrin B and antibiotics.</text>
</comment>
<comment type="catalytic activity">
    <reaction evidence="1">
        <text>O-phospho-L-serine + L-glutamate = N-[(2S)-2-amino-2-carboxyethyl]-L-glutamate + phosphate + H(+)</text>
        <dbReference type="Rhea" id="RHEA:52384"/>
        <dbReference type="ChEBI" id="CHEBI:15378"/>
        <dbReference type="ChEBI" id="CHEBI:29985"/>
        <dbReference type="ChEBI" id="CHEBI:43474"/>
        <dbReference type="ChEBI" id="CHEBI:57524"/>
        <dbReference type="ChEBI" id="CHEBI:134610"/>
        <dbReference type="EC" id="2.5.1.140"/>
    </reaction>
</comment>
<comment type="cofactor">
    <cofactor evidence="1">
        <name>pyridoxal 5'-phosphate</name>
        <dbReference type="ChEBI" id="CHEBI:597326"/>
    </cofactor>
</comment>
<comment type="pathway">
    <text evidence="1">Siderophore biosynthesis.</text>
</comment>
<comment type="subunit">
    <text evidence="1">Homodimer.</text>
</comment>
<comment type="induction">
    <text evidence="2">Up-regulated under iron-deficient growth conditions. Repressed by Fur under iron-rich growth conditions.</text>
</comment>
<comment type="similarity">
    <text evidence="3">Belongs to the cysteine synthase/cystathionine beta-synthase family. SbnA subfamily.</text>
</comment>